<dbReference type="EC" id="1.14.11.29" evidence="1"/>
<dbReference type="EMBL" id="BC081694">
    <property type="protein sequence ID" value="AAH81694.1"/>
    <property type="molecule type" value="mRNA"/>
</dbReference>
<dbReference type="EMBL" id="AY228140">
    <property type="protein sequence ID" value="AAO34711.1"/>
    <property type="molecule type" value="mRNA"/>
</dbReference>
<dbReference type="RefSeq" id="XP_002725482.2">
    <property type="nucleotide sequence ID" value="XM_002725436.3"/>
</dbReference>
<dbReference type="SMR" id="P59722"/>
<dbReference type="BioGRID" id="259192">
    <property type="interactions" value="1"/>
</dbReference>
<dbReference type="CORUM" id="P59722"/>
<dbReference type="FunCoup" id="P59722">
    <property type="interactions" value="1033"/>
</dbReference>
<dbReference type="STRING" id="10116.ENSRNOP00000026767"/>
<dbReference type="BindingDB" id="P59722"/>
<dbReference type="ChEMBL" id="CHEMBL3638322"/>
<dbReference type="PhosphoSitePlus" id="P59722"/>
<dbReference type="jPOST" id="P59722"/>
<dbReference type="PaxDb" id="10116-ENSRNOP00000026767"/>
<dbReference type="UCSC" id="RGD:631375">
    <property type="organism name" value="rat"/>
</dbReference>
<dbReference type="AGR" id="RGD:631375"/>
<dbReference type="RGD" id="631375">
    <property type="gene designation" value="Egln1"/>
</dbReference>
<dbReference type="eggNOG" id="KOG3710">
    <property type="taxonomic scope" value="Eukaryota"/>
</dbReference>
<dbReference type="InParanoid" id="P59722"/>
<dbReference type="OrthoDB" id="76265at2759"/>
<dbReference type="BRENDA" id="1.14.11.29">
    <property type="organism ID" value="5301"/>
</dbReference>
<dbReference type="Reactome" id="R-RNO-1234176">
    <property type="pathway name" value="Oxygen-dependent proline hydroxylation of Hypoxia-inducible Factor Alpha"/>
</dbReference>
<dbReference type="Proteomes" id="UP000002494">
    <property type="component" value="Unplaced"/>
</dbReference>
<dbReference type="GO" id="GO:0005737">
    <property type="term" value="C:cytoplasm"/>
    <property type="evidence" value="ECO:0000266"/>
    <property type="project" value="RGD"/>
</dbReference>
<dbReference type="GO" id="GO:0098978">
    <property type="term" value="C:glutamatergic synapse"/>
    <property type="evidence" value="ECO:0000266"/>
    <property type="project" value="RGD"/>
</dbReference>
<dbReference type="GO" id="GO:0005634">
    <property type="term" value="C:nucleus"/>
    <property type="evidence" value="ECO:0000318"/>
    <property type="project" value="GO_Central"/>
</dbReference>
<dbReference type="GO" id="GO:0014069">
    <property type="term" value="C:postsynaptic density"/>
    <property type="evidence" value="ECO:0000266"/>
    <property type="project" value="RGD"/>
</dbReference>
<dbReference type="GO" id="GO:0016706">
    <property type="term" value="F:2-oxoglutarate-dependent dioxygenase activity"/>
    <property type="evidence" value="ECO:0000266"/>
    <property type="project" value="RGD"/>
</dbReference>
<dbReference type="GO" id="GO:0019899">
    <property type="term" value="F:enzyme binding"/>
    <property type="evidence" value="ECO:0000353"/>
    <property type="project" value="BHF-UCL"/>
</dbReference>
<dbReference type="GO" id="GO:0004857">
    <property type="term" value="F:enzyme inhibitor activity"/>
    <property type="evidence" value="ECO:0000315"/>
    <property type="project" value="BHF-UCL"/>
</dbReference>
<dbReference type="GO" id="GO:0008198">
    <property type="term" value="F:ferrous iron binding"/>
    <property type="evidence" value="ECO:0000250"/>
    <property type="project" value="UniProtKB"/>
</dbReference>
<dbReference type="GO" id="GO:0160082">
    <property type="term" value="F:hypoxia-inducible factor-proline dioxygenase activity"/>
    <property type="evidence" value="ECO:0000266"/>
    <property type="project" value="RGD"/>
</dbReference>
<dbReference type="GO" id="GO:0031418">
    <property type="term" value="F:L-ascorbic acid binding"/>
    <property type="evidence" value="ECO:0007669"/>
    <property type="project" value="UniProtKB-KW"/>
</dbReference>
<dbReference type="GO" id="GO:0031545">
    <property type="term" value="F:peptidyl-proline 4-dioxygenase activity"/>
    <property type="evidence" value="ECO:0000318"/>
    <property type="project" value="GO_Central"/>
</dbReference>
<dbReference type="GO" id="GO:0031543">
    <property type="term" value="F:peptidyl-proline dioxygenase activity"/>
    <property type="evidence" value="ECO:0000314"/>
    <property type="project" value="RGD"/>
</dbReference>
<dbReference type="GO" id="GO:0055008">
    <property type="term" value="P:cardiac muscle tissue morphogenesis"/>
    <property type="evidence" value="ECO:0000266"/>
    <property type="project" value="RGD"/>
</dbReference>
<dbReference type="GO" id="GO:0071456">
    <property type="term" value="P:cellular response to hypoxia"/>
    <property type="evidence" value="ECO:0000318"/>
    <property type="project" value="GO_Central"/>
</dbReference>
<dbReference type="GO" id="GO:0060347">
    <property type="term" value="P:heart trabecula formation"/>
    <property type="evidence" value="ECO:0000266"/>
    <property type="project" value="RGD"/>
</dbReference>
<dbReference type="GO" id="GO:0006879">
    <property type="term" value="P:intracellular iron ion homeostasis"/>
    <property type="evidence" value="ECO:0000266"/>
    <property type="project" value="RGD"/>
</dbReference>
<dbReference type="GO" id="GO:0032364">
    <property type="term" value="P:intracellular oxygen homeostasis"/>
    <property type="evidence" value="ECO:0000266"/>
    <property type="project" value="RGD"/>
</dbReference>
<dbReference type="GO" id="GO:0060711">
    <property type="term" value="P:labyrinthine layer development"/>
    <property type="evidence" value="ECO:0000266"/>
    <property type="project" value="RGD"/>
</dbReference>
<dbReference type="GO" id="GO:1905290">
    <property type="term" value="P:negative regulation of CAMKK-AMPK signaling cascade"/>
    <property type="evidence" value="ECO:0000315"/>
    <property type="project" value="RGD"/>
</dbReference>
<dbReference type="GO" id="GO:0043065">
    <property type="term" value="P:positive regulation of apoptotic process"/>
    <property type="evidence" value="ECO:0000314"/>
    <property type="project" value="RGD"/>
</dbReference>
<dbReference type="GO" id="GO:0043525">
    <property type="term" value="P:positive regulation of neuron apoptotic process"/>
    <property type="evidence" value="ECO:0000314"/>
    <property type="project" value="RGD"/>
</dbReference>
<dbReference type="GO" id="GO:0045944">
    <property type="term" value="P:positive regulation of transcription by RNA polymerase II"/>
    <property type="evidence" value="ECO:0000266"/>
    <property type="project" value="RGD"/>
</dbReference>
<dbReference type="GO" id="GO:0045765">
    <property type="term" value="P:regulation of angiogenesis"/>
    <property type="evidence" value="ECO:0000250"/>
    <property type="project" value="UniProtKB"/>
</dbReference>
<dbReference type="GO" id="GO:0099159">
    <property type="term" value="P:regulation of modification of postsynaptic structure"/>
    <property type="evidence" value="ECO:0000266"/>
    <property type="project" value="RGD"/>
</dbReference>
<dbReference type="GO" id="GO:0043523">
    <property type="term" value="P:regulation of neuron apoptotic process"/>
    <property type="evidence" value="ECO:0000318"/>
    <property type="project" value="GO_Central"/>
</dbReference>
<dbReference type="GO" id="GO:0140252">
    <property type="term" value="P:regulation protein catabolic process at postsynapse"/>
    <property type="evidence" value="ECO:0000266"/>
    <property type="project" value="RGD"/>
</dbReference>
<dbReference type="GO" id="GO:0001666">
    <property type="term" value="P:response to hypoxia"/>
    <property type="evidence" value="ECO:0000314"/>
    <property type="project" value="RGD"/>
</dbReference>
<dbReference type="GO" id="GO:0071731">
    <property type="term" value="P:response to nitric oxide"/>
    <property type="evidence" value="ECO:0000250"/>
    <property type="project" value="UniProtKB"/>
</dbReference>
<dbReference type="GO" id="GO:0060412">
    <property type="term" value="P:ventricular septum morphogenesis"/>
    <property type="evidence" value="ECO:0000266"/>
    <property type="project" value="RGD"/>
</dbReference>
<dbReference type="FunFam" id="2.60.120.620:FF:000005">
    <property type="entry name" value="Egl nine homolog 1"/>
    <property type="match status" value="1"/>
</dbReference>
<dbReference type="Gene3D" id="2.60.120.620">
    <property type="entry name" value="q2cbj1_9rhob like domain"/>
    <property type="match status" value="1"/>
</dbReference>
<dbReference type="InterPro" id="IPR051559">
    <property type="entry name" value="HIF_prolyl_hydroxylases"/>
</dbReference>
<dbReference type="InterPro" id="IPR005123">
    <property type="entry name" value="Oxoglu/Fe-dep_dioxygenase_dom"/>
</dbReference>
<dbReference type="InterPro" id="IPR006620">
    <property type="entry name" value="Pro_4_hyd_alph"/>
</dbReference>
<dbReference type="InterPro" id="IPR044862">
    <property type="entry name" value="Pro_4_hyd_alph_FE2OG_OXY"/>
</dbReference>
<dbReference type="PANTHER" id="PTHR12907:SF4">
    <property type="entry name" value="EGL NINE HOMOLOG 1"/>
    <property type="match status" value="1"/>
</dbReference>
<dbReference type="PANTHER" id="PTHR12907">
    <property type="entry name" value="EGL NINE HOMOLOG-RELATED"/>
    <property type="match status" value="1"/>
</dbReference>
<dbReference type="Pfam" id="PF13640">
    <property type="entry name" value="2OG-FeII_Oxy_3"/>
    <property type="match status" value="1"/>
</dbReference>
<dbReference type="SMART" id="SM00702">
    <property type="entry name" value="P4Hc"/>
    <property type="match status" value="1"/>
</dbReference>
<dbReference type="PROSITE" id="PS51471">
    <property type="entry name" value="FE2OG_OXY"/>
    <property type="match status" value="1"/>
</dbReference>
<evidence type="ECO:0000250" key="1">
    <source>
        <dbReference type="UniProtKB" id="Q9GZT9"/>
    </source>
</evidence>
<evidence type="ECO:0000255" key="2">
    <source>
        <dbReference type="PROSITE-ProRule" id="PRU00805"/>
    </source>
</evidence>
<evidence type="ECO:0000256" key="3">
    <source>
        <dbReference type="SAM" id="MobiDB-lite"/>
    </source>
</evidence>
<evidence type="ECO:0000269" key="4">
    <source>
    </source>
</evidence>
<evidence type="ECO:0000269" key="5">
    <source>
    </source>
</evidence>
<evidence type="ECO:0000269" key="6">
    <source>
    </source>
</evidence>
<evidence type="ECO:0000305" key="7"/>
<evidence type="ECO:0000312" key="8">
    <source>
        <dbReference type="EMBL" id="AAH81694.1"/>
    </source>
</evidence>
<feature type="chain" id="PRO_0000206663" description="Egl nine homolog 1">
    <location>
        <begin position="1" status="less than"/>
        <end position="338"/>
    </location>
</feature>
<feature type="domain" description="Fe2OG dioxygenase" evidence="2">
    <location>
        <begin position="209"/>
        <end position="307"/>
    </location>
</feature>
<feature type="region of interest" description="Disordered" evidence="3">
    <location>
        <begin position="1"/>
        <end position="99"/>
    </location>
</feature>
<feature type="region of interest" description="Beta(2)beta(3) 'finger-like' loop" evidence="1">
    <location>
        <begin position="156"/>
        <end position="166"/>
    </location>
</feature>
<feature type="compositionally biased region" description="Low complexity" evidence="3">
    <location>
        <begin position="1"/>
        <end position="11"/>
    </location>
</feature>
<feature type="binding site" evidence="1 2">
    <location>
        <position position="228"/>
    </location>
    <ligand>
        <name>Fe cation</name>
        <dbReference type="ChEBI" id="CHEBI:24875"/>
    </ligand>
</feature>
<feature type="binding site" evidence="1 2">
    <location>
        <position position="230"/>
    </location>
    <ligand>
        <name>Fe cation</name>
        <dbReference type="ChEBI" id="CHEBI:24875"/>
    </ligand>
</feature>
<feature type="binding site" evidence="1 2">
    <location>
        <position position="289"/>
    </location>
    <ligand>
        <name>Fe cation</name>
        <dbReference type="ChEBI" id="CHEBI:24875"/>
    </ligand>
</feature>
<feature type="binding site" evidence="2">
    <location>
        <position position="298"/>
    </location>
    <ligand>
        <name>2-oxoglutarate</name>
        <dbReference type="ChEBI" id="CHEBI:16810"/>
    </ligand>
</feature>
<feature type="modified residue" description="Phosphoserine" evidence="1">
    <location>
        <position position="52"/>
    </location>
</feature>
<feature type="modified residue" description="S-nitrosocysteine" evidence="1">
    <location>
        <position position="116"/>
    </location>
</feature>
<feature type="modified residue" description="S-nitrosocysteine" evidence="1">
    <location>
        <position position="123"/>
    </location>
</feature>
<feature type="modified residue" description="S-nitrosocysteine" evidence="1">
    <location>
        <position position="217"/>
    </location>
</feature>
<feature type="modified residue" description="S-nitrosocysteine" evidence="1">
    <location>
        <position position="238"/>
    </location>
</feature>
<feature type="modified residue" description="S-nitrosocysteine" evidence="1">
    <location>
        <position position="241"/>
    </location>
</feature>
<feature type="sequence conflict" description="In Ref. 2; AAH81694." evidence="7" ref="2">
    <original>T</original>
    <variation>R</variation>
    <location>
        <position position="36"/>
    </location>
</feature>
<feature type="non-terminal residue" evidence="7">
    <location>
        <position position="1"/>
    </location>
</feature>
<reference key="1">
    <citation type="journal article" date="2004" name="Nature">
        <title>Genome sequence of the Brown Norway rat yields insights into mammalian evolution.</title>
        <authorList>
            <person name="Gibbs R.A."/>
            <person name="Weinstock G.M."/>
            <person name="Metzker M.L."/>
            <person name="Muzny D.M."/>
            <person name="Sodergren E.J."/>
            <person name="Scherer S."/>
            <person name="Scott G."/>
            <person name="Steffen D."/>
            <person name="Worley K.C."/>
            <person name="Burch P.E."/>
            <person name="Okwuonu G."/>
            <person name="Hines S."/>
            <person name="Lewis L."/>
            <person name="Deramo C."/>
            <person name="Delgado O."/>
            <person name="Dugan-Rocha S."/>
            <person name="Miner G."/>
            <person name="Morgan M."/>
            <person name="Hawes A."/>
            <person name="Gill R."/>
            <person name="Holt R.A."/>
            <person name="Adams M.D."/>
            <person name="Amanatides P.G."/>
            <person name="Baden-Tillson H."/>
            <person name="Barnstead M."/>
            <person name="Chin S."/>
            <person name="Evans C.A."/>
            <person name="Ferriera S."/>
            <person name="Fosler C."/>
            <person name="Glodek A."/>
            <person name="Gu Z."/>
            <person name="Jennings D."/>
            <person name="Kraft C.L."/>
            <person name="Nguyen T."/>
            <person name="Pfannkoch C.M."/>
            <person name="Sitter C."/>
            <person name="Sutton G.G."/>
            <person name="Venter J.C."/>
            <person name="Woodage T."/>
            <person name="Smith D."/>
            <person name="Lee H.-M."/>
            <person name="Gustafson E."/>
            <person name="Cahill P."/>
            <person name="Kana A."/>
            <person name="Doucette-Stamm L."/>
            <person name="Weinstock K."/>
            <person name="Fechtel K."/>
            <person name="Weiss R.B."/>
            <person name="Dunn D.M."/>
            <person name="Green E.D."/>
            <person name="Blakesley R.W."/>
            <person name="Bouffard G.G."/>
            <person name="De Jong P.J."/>
            <person name="Osoegawa K."/>
            <person name="Zhu B."/>
            <person name="Marra M."/>
            <person name="Schein J."/>
            <person name="Bosdet I."/>
            <person name="Fjell C."/>
            <person name="Jones S."/>
            <person name="Krzywinski M."/>
            <person name="Mathewson C."/>
            <person name="Siddiqui A."/>
            <person name="Wye N."/>
            <person name="McPherson J."/>
            <person name="Zhao S."/>
            <person name="Fraser C.M."/>
            <person name="Shetty J."/>
            <person name="Shatsman S."/>
            <person name="Geer K."/>
            <person name="Chen Y."/>
            <person name="Abramzon S."/>
            <person name="Nierman W.C."/>
            <person name="Havlak P.H."/>
            <person name="Chen R."/>
            <person name="Durbin K.J."/>
            <person name="Egan A."/>
            <person name="Ren Y."/>
            <person name="Song X.-Z."/>
            <person name="Li B."/>
            <person name="Liu Y."/>
            <person name="Qin X."/>
            <person name="Cawley S."/>
            <person name="Cooney A.J."/>
            <person name="D'Souza L.M."/>
            <person name="Martin K."/>
            <person name="Wu J.Q."/>
            <person name="Gonzalez-Garay M.L."/>
            <person name="Jackson A.R."/>
            <person name="Kalafus K.J."/>
            <person name="McLeod M.P."/>
            <person name="Milosavljevic A."/>
            <person name="Virk D."/>
            <person name="Volkov A."/>
            <person name="Wheeler D.A."/>
            <person name="Zhang Z."/>
            <person name="Bailey J.A."/>
            <person name="Eichler E.E."/>
            <person name="Tuzun E."/>
            <person name="Birney E."/>
            <person name="Mongin E."/>
            <person name="Ureta-Vidal A."/>
            <person name="Woodwark C."/>
            <person name="Zdobnov E."/>
            <person name="Bork P."/>
            <person name="Suyama M."/>
            <person name="Torrents D."/>
            <person name="Alexandersson M."/>
            <person name="Trask B.J."/>
            <person name="Young J.M."/>
            <person name="Huang H."/>
            <person name="Wang H."/>
            <person name="Xing H."/>
            <person name="Daniels S."/>
            <person name="Gietzen D."/>
            <person name="Schmidt J."/>
            <person name="Stevens K."/>
            <person name="Vitt U."/>
            <person name="Wingrove J."/>
            <person name="Camara F."/>
            <person name="Mar Alba M."/>
            <person name="Abril J.F."/>
            <person name="Guigo R."/>
            <person name="Smit A."/>
            <person name="Dubchak I."/>
            <person name="Rubin E.M."/>
            <person name="Couronne O."/>
            <person name="Poliakov A."/>
            <person name="Huebner N."/>
            <person name="Ganten D."/>
            <person name="Goesele C."/>
            <person name="Hummel O."/>
            <person name="Kreitler T."/>
            <person name="Lee Y.-A."/>
            <person name="Monti J."/>
            <person name="Schulz H."/>
            <person name="Zimdahl H."/>
            <person name="Himmelbauer H."/>
            <person name="Lehrach H."/>
            <person name="Jacob H.J."/>
            <person name="Bromberg S."/>
            <person name="Gullings-Handley J."/>
            <person name="Jensen-Seaman M.I."/>
            <person name="Kwitek A.E."/>
            <person name="Lazar J."/>
            <person name="Pasko D."/>
            <person name="Tonellato P.J."/>
            <person name="Twigger S."/>
            <person name="Ponting C.P."/>
            <person name="Duarte J.M."/>
            <person name="Rice S."/>
            <person name="Goodstadt L."/>
            <person name="Beatson S.A."/>
            <person name="Emes R.D."/>
            <person name="Winter E.E."/>
            <person name="Webber C."/>
            <person name="Brandt P."/>
            <person name="Nyakatura G."/>
            <person name="Adetobi M."/>
            <person name="Chiaromonte F."/>
            <person name="Elnitski L."/>
            <person name="Eswara P."/>
            <person name="Hardison R.C."/>
            <person name="Hou M."/>
            <person name="Kolbe D."/>
            <person name="Makova K."/>
            <person name="Miller W."/>
            <person name="Nekrutenko A."/>
            <person name="Riemer C."/>
            <person name="Schwartz S."/>
            <person name="Taylor J."/>
            <person name="Yang S."/>
            <person name="Zhang Y."/>
            <person name="Lindpaintner K."/>
            <person name="Andrews T.D."/>
            <person name="Caccamo M."/>
            <person name="Clamp M."/>
            <person name="Clarke L."/>
            <person name="Curwen V."/>
            <person name="Durbin R.M."/>
            <person name="Eyras E."/>
            <person name="Searle S.M."/>
            <person name="Cooper G.M."/>
            <person name="Batzoglou S."/>
            <person name="Brudno M."/>
            <person name="Sidow A."/>
            <person name="Stone E.A."/>
            <person name="Payseur B.A."/>
            <person name="Bourque G."/>
            <person name="Lopez-Otin C."/>
            <person name="Puente X.S."/>
            <person name="Chakrabarti K."/>
            <person name="Chatterji S."/>
            <person name="Dewey C."/>
            <person name="Pachter L."/>
            <person name="Bray N."/>
            <person name="Yap V.B."/>
            <person name="Caspi A."/>
            <person name="Tesler G."/>
            <person name="Pevzner P.A."/>
            <person name="Haussler D."/>
            <person name="Roskin K.M."/>
            <person name="Baertsch R."/>
            <person name="Clawson H."/>
            <person name="Furey T.S."/>
            <person name="Hinrichs A.S."/>
            <person name="Karolchik D."/>
            <person name="Kent W.J."/>
            <person name="Rosenbloom K.R."/>
            <person name="Trumbower H."/>
            <person name="Weirauch M."/>
            <person name="Cooper D.N."/>
            <person name="Stenson P.D."/>
            <person name="Ma B."/>
            <person name="Brent M."/>
            <person name="Arumugam M."/>
            <person name="Shteynberg D."/>
            <person name="Copley R.R."/>
            <person name="Taylor M.S."/>
            <person name="Riethman H."/>
            <person name="Mudunuri U."/>
            <person name="Peterson J."/>
            <person name="Guyer M."/>
            <person name="Felsenfeld A."/>
            <person name="Old S."/>
            <person name="Mockrin S."/>
            <person name="Collins F.S."/>
        </authorList>
    </citation>
    <scope>NUCLEOTIDE SEQUENCE [LARGE SCALE GENOMIC DNA]</scope>
    <source>
        <strain>Brown Norway</strain>
    </source>
</reference>
<reference key="2">
    <citation type="journal article" date="2004" name="Genome Res.">
        <title>The status, quality, and expansion of the NIH full-length cDNA project: the Mammalian Gene Collection (MGC).</title>
        <authorList>
            <consortium name="The MGC Project Team"/>
        </authorList>
    </citation>
    <scope>NUCLEOTIDE SEQUENCE [LARGE SCALE MRNA] OF 36-338</scope>
    <source>
        <tissue evidence="8">Heart</tissue>
    </source>
</reference>
<reference key="3">
    <citation type="submission" date="2003-01" db="EMBL/GenBank/DDBJ databases">
        <title>Characterization of prolyl hydroxylase EGLN1 in rat C6 glioma cell line.</title>
        <authorList>
            <person name="Duplan E."/>
        </authorList>
    </citation>
    <scope>NUCLEOTIDE SEQUENCE [MRNA] OF 117-338</scope>
    <source>
        <strain>Sprague-Dawley</strain>
        <tissue>Glial cell</tissue>
    </source>
</reference>
<reference key="4">
    <citation type="journal article" date="2003" name="J. Biol. Chem.">
        <title>Cyclosporin A prevents the hypoxic adaptation by activating hypoxia-inducible factor-1alpha Pro-564 hydroxylation.</title>
        <authorList>
            <person name="D'Angelo G."/>
            <person name="Duplan E."/>
            <person name="Vigne P."/>
            <person name="Frelin C."/>
        </authorList>
    </citation>
    <scope>FUNCTION</scope>
    <scope>ACTIVITY REGULATION</scope>
</reference>
<reference key="5">
    <citation type="journal article" date="2003" name="J. Biol. Chem.">
        <title>Hypoxia up-regulates prolyl hydroxylase activity: a feedback mechanism that limits HIF-1 responses during reoxygenation.</title>
        <authorList>
            <person name="D'Angelo G."/>
            <person name="Duplan E."/>
            <person name="Boyer N."/>
            <person name="Vigne P."/>
            <person name="Frelin C."/>
        </authorList>
    </citation>
    <scope>ACTIVITY REGULATION</scope>
    <scope>INDUCTION</scope>
</reference>
<reference key="6">
    <citation type="journal article" date="2006" name="J. Mol. Cell. Cardiol.">
        <title>HIF prolyl hydroxylases in the rat; organ distribution and changes in expression following hypoxia and coronary artery ligation.</title>
        <authorList>
            <person name="Willam C."/>
            <person name="Maxwell P.H."/>
            <person name="Nichols L."/>
            <person name="Lygate C."/>
            <person name="Tian Y.M."/>
            <person name="Bernhardt W."/>
            <person name="Wiesener M."/>
            <person name="Ratcliffe P.J."/>
            <person name="Eckardt K.U."/>
            <person name="Pugh C.W."/>
        </authorList>
    </citation>
    <scope>TISSUE SPECIFICITY</scope>
    <scope>SUBCELLULAR LOCATION</scope>
    <scope>INDUCTION</scope>
</reference>
<proteinExistence type="evidence at transcript level"/>
<accession>P59722</accession>
<accession>Q642G6</accession>
<keyword id="KW-0963">Cytoplasm</keyword>
<keyword id="KW-0223">Dioxygenase</keyword>
<keyword id="KW-0408">Iron</keyword>
<keyword id="KW-0479">Metal-binding</keyword>
<keyword id="KW-0539">Nucleus</keyword>
<keyword id="KW-0560">Oxidoreductase</keyword>
<keyword id="KW-0597">Phosphoprotein</keyword>
<keyword id="KW-1185">Reference proteome</keyword>
<keyword id="KW-0702">S-nitrosylation</keyword>
<keyword id="KW-0847">Vitamin C</keyword>
<name>EGLN1_RAT</name>
<comment type="function">
    <text evidence="1 4">Cellular oxygen sensor that catalyzes, under normoxic conditions, the post-translational formation of 4-hydroxyproline in hypoxia-inducible factor (HIF) alpha proteins. Hydroxylates a specific proline found in each of the oxygen-dependent degradation (ODD) domains (N-terminal, NODD, and C-terminal, CODD) of HIF1A. Also hydroxylates HIF2A. Has a preference for the CODD site for both HIF1A and HIF1B. Hydroxylated HIFs are then targeted for proteasomal degradation via the von Hippel-Lindau ubiquitination complex. Under hypoxic conditions, the hydroxylation reaction is attenuated allowing HIFs to escape degradation resulting in their translocation to the nucleus, heterodimerization with HIF1B, and increased expression of hypoxy-inducible genes. EGLN1 is the most important isozyme under normoxia and, through regulating the stability of HIF1, involved in various hypoxia-influenced processes such as angiogenesis in retinal and cardiac functionality. Target proteins are preferentially recognized via a LXXLAP motif.</text>
</comment>
<comment type="catalytic activity">
    <reaction evidence="1">
        <text>L-prolyl-[hypoxia-inducible factor alpha subunit] + 2-oxoglutarate + O2 = trans-4-hydroxy-L-prolyl-[hypoxia-inducible factor alpha subunit] + succinate + CO2</text>
        <dbReference type="Rhea" id="RHEA:48400"/>
        <dbReference type="Rhea" id="RHEA-COMP:12093"/>
        <dbReference type="Rhea" id="RHEA-COMP:12094"/>
        <dbReference type="ChEBI" id="CHEBI:15379"/>
        <dbReference type="ChEBI" id="CHEBI:16526"/>
        <dbReference type="ChEBI" id="CHEBI:16810"/>
        <dbReference type="ChEBI" id="CHEBI:30031"/>
        <dbReference type="ChEBI" id="CHEBI:50342"/>
        <dbReference type="ChEBI" id="CHEBI:61965"/>
        <dbReference type="EC" id="1.14.11.29"/>
    </reaction>
</comment>
<comment type="cofactor">
    <cofactor evidence="1 2">
        <name>Fe(2+)</name>
        <dbReference type="ChEBI" id="CHEBI:29033"/>
    </cofactor>
    <text evidence="1 2">Binds 1 Fe(2+) ion per subunit.</text>
</comment>
<comment type="cofactor">
    <cofactor evidence="1">
        <name>L-ascorbate</name>
        <dbReference type="ChEBI" id="CHEBI:38290"/>
    </cofactor>
</comment>
<comment type="activity regulation">
    <text evidence="4 5">Increased activation in hypoxia. Hydroxylation of the C-terminal ODD domain (CODD) proline of HIF1A is activated by cyclosporin A (CsA).</text>
</comment>
<comment type="subunit">
    <text evidence="1">Monomer. Interacts with ING4; the interaction inhibits the hydroxylation of HIF alpha proteins. Interacts with PTGES3 (via PXLE motif); thereby recruiting EGLN1 to the HSP90 pathway to facilitate HIF alpha proteins hydroxylation. Interacts with LIMD1. Found in a complex composed of LIMD1, VHL, EGLN1/PHD2, ELOB and CUL2. Interacts with EPAS1. Interacts with CBFA2T3 and HIF1A.</text>
</comment>
<comment type="subcellular location">
    <subcellularLocation>
        <location evidence="6">Cytoplasm</location>
    </subcellularLocation>
    <subcellularLocation>
        <location evidence="6">Nucleus</location>
    </subcellularLocation>
    <text evidence="1">Mainly cytoplasmic. Shuttles between the nucleus and cytoplasm. Nuclear export requires functional XPO1.</text>
</comment>
<comment type="tissue specificity">
    <text evidence="6">Expressed in heart, liver, kidney, brain, liver and testis. Highest levels in heart, lowest in liver.</text>
</comment>
<comment type="induction">
    <text evidence="5 6">Up-regulated by hypoxia especially in liver and testis. Levels up-regulated also in myocardial infarction predominantly in cardiomyocytes.</text>
</comment>
<comment type="domain">
    <text evidence="1">The beta(2)beta(3) 'finger-like' loop domain is important for substrate (HIFs' CODD/NODD) selectivity.</text>
</comment>
<comment type="PTM">
    <text evidence="1">S-nitrosylation inhibits the enzyme activity up to 60% under aerobic conditions. Chelation of Fe(2+) has no effect on the S-nitrosylation. It is uncertain whether nitrosylation occurs on Cys-238 or Cys-241.</text>
</comment>
<protein>
    <recommendedName>
        <fullName>Egl nine homolog 1</fullName>
        <ecNumber evidence="1">1.14.11.29</ecNumber>
    </recommendedName>
    <alternativeName>
        <fullName>Hypoxia-inducible factor prolyl hydroxylase 2</fullName>
        <shortName>HIF-PH2</shortName>
        <shortName>HIF-prolyl hydroxylase 2</shortName>
        <shortName>HPH-2</shortName>
    </alternativeName>
    <alternativeName>
        <fullName>Prolyl hydroxylase domain-containing protein 2</fullName>
        <shortName>PHD2</shortName>
    </alternativeName>
</protein>
<gene>
    <name type="primary">Egln1</name>
</gene>
<organism>
    <name type="scientific">Rattus norvegicus</name>
    <name type="common">Rat</name>
    <dbReference type="NCBI Taxonomy" id="10116"/>
    <lineage>
        <taxon>Eukaryota</taxon>
        <taxon>Metazoa</taxon>
        <taxon>Chordata</taxon>
        <taxon>Craniata</taxon>
        <taxon>Vertebrata</taxon>
        <taxon>Euteleostomi</taxon>
        <taxon>Mammalia</taxon>
        <taxon>Eutheria</taxon>
        <taxon>Euarchontoglires</taxon>
        <taxon>Glires</taxon>
        <taxon>Rodentia</taxon>
        <taxon>Myomorpha</taxon>
        <taxon>Muroidea</taxon>
        <taxon>Muridae</taxon>
        <taxon>Murinae</taxon>
        <taxon>Rattus</taxon>
    </lineage>
</organism>
<sequence length="338" mass="36093">PRAQPAPAQPRVAPPPGGAPGAARAGGAARRGDSSTAASRVPGPEDATQAGSGPGPAEPSSEDPPPSRSPGPERASLCPAGGGPGEALSPSGGLRPNGQTKPLPALKLALEYIVPCMNKHGICVVDDFLGRETGQQIGDEVRALHDTGKFTDGQLVSQKSDSSKDIRGDKITWIEGKEPGCETIGLLMSSMDDLIRHCSGKLGNYRINGRTKAMVACYPGNGTGYVRHVDNPNGDGRCVTCIYYLNKDWDAKVSGGILRIFPEGKAQFADIEPKFDRLLFFWSDRRNPHEVQPAYATRYAITVWYFDADERARAKVKYLTGEKGVRVELKPNSVSKDV</sequence>